<sequence>MGPIDTSQRLARLRELMQERKVDVYIVPSEDSHQSEYIAHCDGRREFISGFTGSAGCAIVSMTKAALSTDGRYFNQAAKQLDNNWILLKRGFENMPTWQEWTAEQAEGGKVVGVDPSLITASDARNLSETIKKCGGSLLGVQENLVDLVWGTERPARPSEKVALHPIEFAGKSFEEKISDLRKELQKKKSAGFVISMLDEIAWLFNLRGNDIPYNPVFFAYAIITQSTADLYIDEEKLPAEVKNYLGDKVSLKPYSSIFEDAKVLGQSAQNKSDGEASAKPPQKFLISTRASWSLSLALGGEKNVEEVRSPITDAKAIKNEAELEGMRACHIRDGAALSEYFAWLENELVNKKTVLNEVDASDKLEQIRSKHQHFVGLSFDTISSTGPNAAVIHYKAERNNCSIIDPKAVYLCDSGAQYLDGTTDTTRTLHFGEPTEMEKKAYTLVLKGLISIDTAVFPKGTTGFALDAFARQYLWKEGLDYLHGTGHGVGSYLNVHEGPIGLGTRVQYSEVAIAPGNVISDEPGYYEDGVFGIRIENIIMAKEVKTTHKFGEKPWLGFEHVTMTPLCQKLINPSLLSDAEKKWVNDYHTEIWEKTSKYFENDELTRNWLKRETQPI</sequence>
<keyword id="KW-0031">Aminopeptidase</keyword>
<keyword id="KW-0378">Hydrolase</keyword>
<keyword id="KW-0464">Manganese</keyword>
<keyword id="KW-0479">Metal-binding</keyword>
<keyword id="KW-0482">Metalloprotease</keyword>
<keyword id="KW-0645">Protease</keyword>
<keyword id="KW-1185">Reference proteome</keyword>
<gene>
    <name type="primary">AMPP</name>
    <name type="ORF">HCBG_02090</name>
</gene>
<organism>
    <name type="scientific">Ajellomyces capsulatus (strain G186AR / H82 / ATCC MYA-2454 / RMSCC 2432)</name>
    <name type="common">Darling's disease fungus</name>
    <name type="synonym">Histoplasma capsulatum</name>
    <dbReference type="NCBI Taxonomy" id="447093"/>
    <lineage>
        <taxon>Eukaryota</taxon>
        <taxon>Fungi</taxon>
        <taxon>Dikarya</taxon>
        <taxon>Ascomycota</taxon>
        <taxon>Pezizomycotina</taxon>
        <taxon>Eurotiomycetes</taxon>
        <taxon>Eurotiomycetidae</taxon>
        <taxon>Onygenales</taxon>
        <taxon>Ajellomycetaceae</taxon>
        <taxon>Histoplasma</taxon>
    </lineage>
</organism>
<evidence type="ECO:0000250" key="1"/>
<evidence type="ECO:0000305" key="2"/>
<protein>
    <recommendedName>
        <fullName>Probable Xaa-Pro aminopeptidase P</fullName>
        <shortName>AMPP</shortName>
        <shortName>Aminopeptidase P</shortName>
        <ecNumber>3.4.11.9</ecNumber>
    </recommendedName>
    <alternativeName>
        <fullName>Aminoacylproline aminopeptidase</fullName>
    </alternativeName>
    <alternativeName>
        <fullName>Prolidase</fullName>
    </alternativeName>
</protein>
<feature type="chain" id="PRO_0000411770" description="Probable Xaa-Pro aminopeptidase P">
    <location>
        <begin position="1"/>
        <end position="617"/>
    </location>
</feature>
<feature type="binding site" evidence="1">
    <location>
        <position position="414"/>
    </location>
    <ligand>
        <name>Mn(2+)</name>
        <dbReference type="ChEBI" id="CHEBI:29035"/>
        <label>2</label>
    </ligand>
</feature>
<feature type="binding site" evidence="1">
    <location>
        <position position="425"/>
    </location>
    <ligand>
        <name>Mn(2+)</name>
        <dbReference type="ChEBI" id="CHEBI:29035"/>
        <label>1</label>
    </ligand>
</feature>
<feature type="binding site" evidence="1">
    <location>
        <position position="425"/>
    </location>
    <ligand>
        <name>Mn(2+)</name>
        <dbReference type="ChEBI" id="CHEBI:29035"/>
        <label>2</label>
    </ligand>
</feature>
<feature type="binding site" evidence="1">
    <location>
        <position position="523"/>
    </location>
    <ligand>
        <name>Mn(2+)</name>
        <dbReference type="ChEBI" id="CHEBI:29035"/>
        <label>1</label>
    </ligand>
</feature>
<feature type="binding site" evidence="1">
    <location>
        <position position="537"/>
    </location>
    <ligand>
        <name>Mn(2+)</name>
        <dbReference type="ChEBI" id="CHEBI:29035"/>
        <label>1</label>
    </ligand>
</feature>
<feature type="binding site" evidence="1">
    <location>
        <position position="537"/>
    </location>
    <ligand>
        <name>Mn(2+)</name>
        <dbReference type="ChEBI" id="CHEBI:29035"/>
        <label>2</label>
    </ligand>
</feature>
<name>AMPP1_AJECG</name>
<dbReference type="EC" id="3.4.11.9"/>
<dbReference type="EMBL" id="GG663364">
    <property type="protein sequence ID" value="EEH10445.1"/>
    <property type="molecule type" value="Genomic_DNA"/>
</dbReference>
<dbReference type="SMR" id="C0NDZ7"/>
<dbReference type="FunCoup" id="C0NDZ7">
    <property type="interactions" value="360"/>
</dbReference>
<dbReference type="STRING" id="447093.C0NDZ7"/>
<dbReference type="VEuPathDB" id="FungiDB:I7I50_00365"/>
<dbReference type="HOGENOM" id="CLU_011781_2_3_1"/>
<dbReference type="InParanoid" id="C0NDZ7"/>
<dbReference type="Proteomes" id="UP000001631">
    <property type="component" value="Unassembled WGS sequence"/>
</dbReference>
<dbReference type="GO" id="GO:0005737">
    <property type="term" value="C:cytoplasm"/>
    <property type="evidence" value="ECO:0007669"/>
    <property type="project" value="UniProtKB-ARBA"/>
</dbReference>
<dbReference type="GO" id="GO:0046872">
    <property type="term" value="F:metal ion binding"/>
    <property type="evidence" value="ECO:0007669"/>
    <property type="project" value="UniProtKB-KW"/>
</dbReference>
<dbReference type="GO" id="GO:0070006">
    <property type="term" value="F:metalloaminopeptidase activity"/>
    <property type="evidence" value="ECO:0007669"/>
    <property type="project" value="InterPro"/>
</dbReference>
<dbReference type="GO" id="GO:0006508">
    <property type="term" value="P:proteolysis"/>
    <property type="evidence" value="ECO:0007669"/>
    <property type="project" value="UniProtKB-KW"/>
</dbReference>
<dbReference type="CDD" id="cd01085">
    <property type="entry name" value="APP"/>
    <property type="match status" value="1"/>
</dbReference>
<dbReference type="FunFam" id="3.40.350.10:FF:000010">
    <property type="entry name" value="Probable Xaa-Pro aminopeptidase P"/>
    <property type="match status" value="1"/>
</dbReference>
<dbReference type="FunFam" id="3.90.230.10:FF:000007">
    <property type="entry name" value="Xaa-Pro aminopeptidase P"/>
    <property type="match status" value="1"/>
</dbReference>
<dbReference type="FunFam" id="3.40.350.10:FF:000003">
    <property type="entry name" value="Xaa-pro aminopeptidase P"/>
    <property type="match status" value="1"/>
</dbReference>
<dbReference type="Gene3D" id="3.90.230.10">
    <property type="entry name" value="Creatinase/methionine aminopeptidase superfamily"/>
    <property type="match status" value="1"/>
</dbReference>
<dbReference type="Gene3D" id="3.40.350.10">
    <property type="entry name" value="Creatinase/prolidase N-terminal domain"/>
    <property type="match status" value="2"/>
</dbReference>
<dbReference type="InterPro" id="IPR029149">
    <property type="entry name" value="Creatin/AminoP/Spt16_N"/>
</dbReference>
<dbReference type="InterPro" id="IPR036005">
    <property type="entry name" value="Creatinase/aminopeptidase-like"/>
</dbReference>
<dbReference type="InterPro" id="IPR000587">
    <property type="entry name" value="Creatinase_N"/>
</dbReference>
<dbReference type="InterPro" id="IPR000994">
    <property type="entry name" value="Pept_M24"/>
</dbReference>
<dbReference type="InterPro" id="IPR033740">
    <property type="entry name" value="Pept_M24B"/>
</dbReference>
<dbReference type="InterPro" id="IPR032416">
    <property type="entry name" value="Peptidase_M24_C"/>
</dbReference>
<dbReference type="InterPro" id="IPR001131">
    <property type="entry name" value="Peptidase_M24B_aminopep-P_CS"/>
</dbReference>
<dbReference type="InterPro" id="IPR050422">
    <property type="entry name" value="X-Pro_aminopeptidase_P"/>
</dbReference>
<dbReference type="PANTHER" id="PTHR43763">
    <property type="entry name" value="XAA-PRO AMINOPEPTIDASE 1"/>
    <property type="match status" value="1"/>
</dbReference>
<dbReference type="PANTHER" id="PTHR43763:SF6">
    <property type="entry name" value="XAA-PRO AMINOPEPTIDASE 1"/>
    <property type="match status" value="1"/>
</dbReference>
<dbReference type="Pfam" id="PF01321">
    <property type="entry name" value="Creatinase_N"/>
    <property type="match status" value="1"/>
</dbReference>
<dbReference type="Pfam" id="PF16189">
    <property type="entry name" value="Creatinase_N_2"/>
    <property type="match status" value="1"/>
</dbReference>
<dbReference type="Pfam" id="PF00557">
    <property type="entry name" value="Peptidase_M24"/>
    <property type="match status" value="1"/>
</dbReference>
<dbReference type="Pfam" id="PF16188">
    <property type="entry name" value="Peptidase_M24_C"/>
    <property type="match status" value="1"/>
</dbReference>
<dbReference type="SUPFAM" id="SSF55920">
    <property type="entry name" value="Creatinase/aminopeptidase"/>
    <property type="match status" value="1"/>
</dbReference>
<dbReference type="SUPFAM" id="SSF53092">
    <property type="entry name" value="Creatinase/prolidase N-terminal domain"/>
    <property type="match status" value="1"/>
</dbReference>
<dbReference type="PROSITE" id="PS00491">
    <property type="entry name" value="PROLINE_PEPTIDASE"/>
    <property type="match status" value="1"/>
</dbReference>
<reference key="1">
    <citation type="submission" date="2009-02" db="EMBL/GenBank/DDBJ databases">
        <title>The genome sequence of Ajellomyces capsulatus strain G186AR.</title>
        <authorList>
            <person name="Champion M."/>
            <person name="Cuomo C.A."/>
            <person name="Ma L.-J."/>
            <person name="Henn M.R."/>
            <person name="Sil A."/>
            <person name="Goldman B."/>
            <person name="Young S.K."/>
            <person name="Kodira C.D."/>
            <person name="Zeng Q."/>
            <person name="Koehrsen M."/>
            <person name="Alvarado L."/>
            <person name="Berlin A."/>
            <person name="Borenstein D."/>
            <person name="Chen Z."/>
            <person name="Engels R."/>
            <person name="Freedman E."/>
            <person name="Gellesch M."/>
            <person name="Goldberg J."/>
            <person name="Griggs A."/>
            <person name="Gujja S."/>
            <person name="Heiman D."/>
            <person name="Hepburn T."/>
            <person name="Howarth C."/>
            <person name="Jen D."/>
            <person name="Larson L."/>
            <person name="Lewis B."/>
            <person name="Mehta T."/>
            <person name="Park D."/>
            <person name="Pearson M."/>
            <person name="Roberts A."/>
            <person name="Saif S."/>
            <person name="Shea T."/>
            <person name="Shenoy N."/>
            <person name="Sisk P."/>
            <person name="Stolte C."/>
            <person name="Sykes S."/>
            <person name="Walk T."/>
            <person name="White J."/>
            <person name="Yandava C."/>
            <person name="Klein B."/>
            <person name="McEwen J.G."/>
            <person name="Puccia R."/>
            <person name="Goldman G.H."/>
            <person name="Felipe M.S."/>
            <person name="Nino-Vega G."/>
            <person name="San-Blas G."/>
            <person name="Taylor J."/>
            <person name="Mendoza L."/>
            <person name="Galagan J.E."/>
            <person name="Nusbaum C."/>
            <person name="Birren B.W."/>
        </authorList>
    </citation>
    <scope>NUCLEOTIDE SEQUENCE [LARGE SCALE GENOMIC DNA]</scope>
    <source>
        <strain>G186AR / H82 / ATCC MYA-2454 / RMSCC 2432</strain>
    </source>
</reference>
<proteinExistence type="inferred from homology"/>
<accession>C0NDZ7</accession>
<comment type="function">
    <text evidence="1">Catalyzes the removal of a penultimate prolyl residue from the N-termini of peptides.</text>
</comment>
<comment type="catalytic activity">
    <reaction>
        <text>Release of any N-terminal amino acid, including proline, that is linked to proline, even from a dipeptide or tripeptide.</text>
        <dbReference type="EC" id="3.4.11.9"/>
    </reaction>
</comment>
<comment type="cofactor">
    <cofactor evidence="1">
        <name>Mn(2+)</name>
        <dbReference type="ChEBI" id="CHEBI:29035"/>
    </cofactor>
    <text evidence="1">Binds 2 manganese ions per subunit.</text>
</comment>
<comment type="similarity">
    <text evidence="2">Belongs to the peptidase M24B family.</text>
</comment>